<evidence type="ECO:0000255" key="1">
    <source>
        <dbReference type="HAMAP-Rule" id="MF_03182"/>
    </source>
</evidence>
<evidence type="ECO:0000256" key="2">
    <source>
        <dbReference type="SAM" id="MobiDB-lite"/>
    </source>
</evidence>
<evidence type="ECO:0000305" key="3"/>
<gene>
    <name evidence="1" type="primary">PAN2</name>
    <name type="ORF">CHGG_08952</name>
</gene>
<organism>
    <name type="scientific">Chaetomium globosum (strain ATCC 6205 / CBS 148.51 / DSM 1962 / NBRC 6347 / NRRL 1970)</name>
    <name type="common">Soil fungus</name>
    <dbReference type="NCBI Taxonomy" id="306901"/>
    <lineage>
        <taxon>Eukaryota</taxon>
        <taxon>Fungi</taxon>
        <taxon>Dikarya</taxon>
        <taxon>Ascomycota</taxon>
        <taxon>Pezizomycotina</taxon>
        <taxon>Sordariomycetes</taxon>
        <taxon>Sordariomycetidae</taxon>
        <taxon>Sordariales</taxon>
        <taxon>Chaetomiaceae</taxon>
        <taxon>Chaetomium</taxon>
    </lineage>
</organism>
<name>PAN2_CHAGB</name>
<proteinExistence type="inferred from homology"/>
<dbReference type="EC" id="3.1.13.4" evidence="1"/>
<dbReference type="EMBL" id="CH408034">
    <property type="protein sequence ID" value="EAQ84938.1"/>
    <property type="status" value="ALT_SEQ"/>
    <property type="molecule type" value="Genomic_DNA"/>
</dbReference>
<dbReference type="RefSeq" id="XP_001226879.1">
    <property type="nucleotide sequence ID" value="XM_001226878.1"/>
</dbReference>
<dbReference type="SMR" id="Q2GSV2"/>
<dbReference type="FunCoup" id="Q2GSV2">
    <property type="interactions" value="615"/>
</dbReference>
<dbReference type="STRING" id="306901.Q2GSV2"/>
<dbReference type="GeneID" id="4395014"/>
<dbReference type="VEuPathDB" id="FungiDB:CHGG_08952"/>
<dbReference type="eggNOG" id="KOG1275">
    <property type="taxonomic scope" value="Eukaryota"/>
</dbReference>
<dbReference type="HOGENOM" id="CLU_002369_1_0_1"/>
<dbReference type="InParanoid" id="Q2GSV2"/>
<dbReference type="OrthoDB" id="16516at2759"/>
<dbReference type="Proteomes" id="UP000001056">
    <property type="component" value="Unassembled WGS sequence"/>
</dbReference>
<dbReference type="GO" id="GO:0000932">
    <property type="term" value="C:P-body"/>
    <property type="evidence" value="ECO:0007669"/>
    <property type="project" value="TreeGrafter"/>
</dbReference>
<dbReference type="GO" id="GO:0031251">
    <property type="term" value="C:PAN complex"/>
    <property type="evidence" value="ECO:0007669"/>
    <property type="project" value="UniProtKB-UniRule"/>
</dbReference>
<dbReference type="GO" id="GO:0046872">
    <property type="term" value="F:metal ion binding"/>
    <property type="evidence" value="ECO:0007669"/>
    <property type="project" value="UniProtKB-KW"/>
</dbReference>
<dbReference type="GO" id="GO:0003676">
    <property type="term" value="F:nucleic acid binding"/>
    <property type="evidence" value="ECO:0007669"/>
    <property type="project" value="InterPro"/>
</dbReference>
<dbReference type="GO" id="GO:0004535">
    <property type="term" value="F:poly(A)-specific ribonuclease activity"/>
    <property type="evidence" value="ECO:0007669"/>
    <property type="project" value="UniProtKB-UniRule"/>
</dbReference>
<dbReference type="GO" id="GO:0006397">
    <property type="term" value="P:mRNA processing"/>
    <property type="evidence" value="ECO:0007669"/>
    <property type="project" value="UniProtKB-KW"/>
</dbReference>
<dbReference type="GO" id="GO:0000289">
    <property type="term" value="P:nuclear-transcribed mRNA poly(A) tail shortening"/>
    <property type="evidence" value="ECO:0007669"/>
    <property type="project" value="UniProtKB-UniRule"/>
</dbReference>
<dbReference type="CDD" id="cd06143">
    <property type="entry name" value="PAN2_exo"/>
    <property type="match status" value="1"/>
</dbReference>
<dbReference type="CDD" id="cd02672">
    <property type="entry name" value="Peptidase_C19P"/>
    <property type="match status" value="1"/>
</dbReference>
<dbReference type="FunFam" id="2.130.10.10:FF:000459">
    <property type="entry name" value="PAN2-PAN3 deadenylation complex catalytic subunit PAN2"/>
    <property type="match status" value="1"/>
</dbReference>
<dbReference type="FunFam" id="3.30.420.10:FF:000028">
    <property type="entry name" value="PAN2-PAN3 deadenylation complex catalytic subunit PAN2"/>
    <property type="match status" value="1"/>
</dbReference>
<dbReference type="Gene3D" id="3.90.70.10">
    <property type="entry name" value="Cysteine proteinases"/>
    <property type="match status" value="1"/>
</dbReference>
<dbReference type="Gene3D" id="3.30.420.10">
    <property type="entry name" value="Ribonuclease H-like superfamily/Ribonuclease H"/>
    <property type="match status" value="1"/>
</dbReference>
<dbReference type="Gene3D" id="2.130.10.10">
    <property type="entry name" value="YVTN repeat-like/Quinoprotein amine dehydrogenase"/>
    <property type="match status" value="1"/>
</dbReference>
<dbReference type="HAMAP" id="MF_03182">
    <property type="entry name" value="PAN2"/>
    <property type="match status" value="1"/>
</dbReference>
<dbReference type="InterPro" id="IPR013520">
    <property type="entry name" value="Exonuclease_RNaseT/DNA_pol3"/>
</dbReference>
<dbReference type="InterPro" id="IPR030843">
    <property type="entry name" value="PAN2"/>
</dbReference>
<dbReference type="InterPro" id="IPR050785">
    <property type="entry name" value="PAN2-PAN3_catalytic_subunit"/>
</dbReference>
<dbReference type="InterPro" id="IPR048841">
    <property type="entry name" value="PAN2_N"/>
</dbReference>
<dbReference type="InterPro" id="IPR028881">
    <property type="entry name" value="PAN2_UCH_dom"/>
</dbReference>
<dbReference type="InterPro" id="IPR038765">
    <property type="entry name" value="Papain-like_cys_pep_sf"/>
</dbReference>
<dbReference type="InterPro" id="IPR012337">
    <property type="entry name" value="RNaseH-like_sf"/>
</dbReference>
<dbReference type="InterPro" id="IPR036397">
    <property type="entry name" value="RNaseH_sf"/>
</dbReference>
<dbReference type="InterPro" id="IPR028889">
    <property type="entry name" value="USP_dom"/>
</dbReference>
<dbReference type="InterPro" id="IPR015943">
    <property type="entry name" value="WD40/YVTN_repeat-like_dom_sf"/>
</dbReference>
<dbReference type="InterPro" id="IPR036322">
    <property type="entry name" value="WD40_repeat_dom_sf"/>
</dbReference>
<dbReference type="PANTHER" id="PTHR15728">
    <property type="entry name" value="DEADENYLATION COMPLEX CATALYTIC SUBUNIT PAN2"/>
    <property type="match status" value="1"/>
</dbReference>
<dbReference type="PANTHER" id="PTHR15728:SF0">
    <property type="entry name" value="PAN2-PAN3 DEADENYLATION COMPLEX CATALYTIC SUBUNIT PAN2"/>
    <property type="match status" value="1"/>
</dbReference>
<dbReference type="Pfam" id="PF20770">
    <property type="entry name" value="PAN2_N"/>
    <property type="match status" value="1"/>
</dbReference>
<dbReference type="Pfam" id="PF00929">
    <property type="entry name" value="RNase_T"/>
    <property type="match status" value="1"/>
</dbReference>
<dbReference type="Pfam" id="PF13423">
    <property type="entry name" value="UCH_1"/>
    <property type="match status" value="1"/>
</dbReference>
<dbReference type="SMART" id="SM00479">
    <property type="entry name" value="EXOIII"/>
    <property type="match status" value="1"/>
</dbReference>
<dbReference type="SUPFAM" id="SSF54001">
    <property type="entry name" value="Cysteine proteinases"/>
    <property type="match status" value="1"/>
</dbReference>
<dbReference type="SUPFAM" id="SSF53098">
    <property type="entry name" value="Ribonuclease H-like"/>
    <property type="match status" value="1"/>
</dbReference>
<dbReference type="SUPFAM" id="SSF50978">
    <property type="entry name" value="WD40 repeat-like"/>
    <property type="match status" value="1"/>
</dbReference>
<dbReference type="PROSITE" id="PS50235">
    <property type="entry name" value="USP_3"/>
    <property type="match status" value="1"/>
</dbReference>
<keyword id="KW-0963">Cytoplasm</keyword>
<keyword id="KW-0269">Exonuclease</keyword>
<keyword id="KW-0378">Hydrolase</keyword>
<keyword id="KW-0479">Metal-binding</keyword>
<keyword id="KW-0507">mRNA processing</keyword>
<keyword id="KW-0540">Nuclease</keyword>
<keyword id="KW-1185">Reference proteome</keyword>
<keyword id="KW-0677">Repeat</keyword>
<keyword id="KW-0853">WD repeat</keyword>
<sequence length="1102" mass="123849">MDADWDEVTRIAFPAPGSNDYPRPATALAFDTIAELLWAGNDRGRVVSFYGRDLQRYTAFKIHPPSEGPVRQFLFHDKGVIALGTRSVHMAMRRGPTLWNIRHDEMENLQCMSFTSKGASEIIVAGFQDTMFVIDVVKGEIVKQKSKYICAATRTGCVDLLDPITFKTVRSWQAHASYINDMDAQNDFIVTCGGSLKQQAAQTYMLDPYVNVFDLKNMTSMKPMPFPPLAAHVRLHPRMLTTSIVTSQHGQMHVVDIMNPNTSNVRYANVMSFINLFEIAPSGEALAMADTECNIHLWGSPSKIHFTDMAIPIEMPKAEEPAPMLDWSPDTPLSSIGMPYYREQLFSAWPSDIISDIGAPPVQLDPSFLASLKQMEWGFYGRNSRGLRRNQVEDTRACMKPSMQPPKFLSEKARESAMSYSAAVPDPKVEQVPESSTDELESLKPEAPPIYRNLEIKYSKFGVDDFDFGYYNKTQYAGLENHIPNSYANSLLQLIHYTPLLRNMALQHAATACVTDLCLLCELGFVFDMLQKAEGSTCQATNMFKALGATPQAAPLGLLEEETHVPSLSTMSQGLSRFLFDRINHDYRSINPISTTLEQTLFNLPQPPTPDELVSRVLATSAVVTIKCMNCRSETTRPGTAQVNDLMYPPPKGSARGGRMHKTTFSQVLKTGVERETASKGWCSRCQRYQNLQMRKTIHSVPAVLAINSAISSQEHRKLWATPGWLPEEIGIIVDQGQFFCFEGEDLKLHLQRGMHNITVYSLIGMVVNIESSSPQKTHLVSVINVAHADAAPSAESKWHLFNDFSVRPISTAEALTFNAAWKLPAVLLFQVKAANNKTNMDWKTKLDTSLLYQDLTPHSDEKTYHVLDLEAEPPGPDTIVGLDTEFVSLKQPEIQMNSDGERETIRPMSHALARVSVVRGQGEHEGEAFIDDYIAIREPVVDYLTLYSGITPGDLDPRTTKHNLVSLKVAYKKLWVLLNLGCKFLGHGLRQDFRVINIQVPRAQVIDTIQVFYLKARLRKLSLAFLAWFLLKEDIQLETHDSIEDARTALKLYRKYLEFEDAGILEAMLEDIYKVGRATNFKPPRKDDQVIQRTDTPFLSR</sequence>
<reference key="1">
    <citation type="journal article" date="2015" name="Genome Announc.">
        <title>Draft genome sequence of the cellulolytic fungus Chaetomium globosum.</title>
        <authorList>
            <person name="Cuomo C.A."/>
            <person name="Untereiner W.A."/>
            <person name="Ma L.-J."/>
            <person name="Grabherr M."/>
            <person name="Birren B.W."/>
        </authorList>
    </citation>
    <scope>NUCLEOTIDE SEQUENCE [LARGE SCALE GENOMIC DNA]</scope>
    <source>
        <strain>ATCC 6205 / CBS 148.51 / DSM 1962 / NBRC 6347 / NRRL 1970</strain>
    </source>
</reference>
<accession>Q2GSV2</accession>
<protein>
    <recommendedName>
        <fullName evidence="1">PAN2-PAN3 deadenylation complex catalytic subunit PAN2</fullName>
        <ecNumber evidence="1">3.1.13.4</ecNumber>
    </recommendedName>
    <alternativeName>
        <fullName evidence="1">PAB1P-dependent poly(A)-specific ribonuclease</fullName>
    </alternativeName>
    <alternativeName>
        <fullName evidence="1">Poly(A)-nuclease deadenylation complex subunit 2</fullName>
        <shortName evidence="1">PAN deadenylation complex subunit 2</shortName>
    </alternativeName>
</protein>
<comment type="function">
    <text evidence="1">Catalytic subunit of the poly(A)-nuclease (PAN) deadenylation complex, one of two cytoplasmic mRNA deadenylases involved in mRNA turnover. PAN specifically shortens poly(A) tails of RNA and the activity is stimulated by poly(A)-binding protein PAB1. PAN deadenylation is followed by rapid degradation of the shortened mRNA tails by the CCR4-NOT complex. Deadenylated mRNAs are then degraded by two alternative mechanisms, namely exosome-mediated 3'-5' exonucleolytic degradation, or deadenylation-dependent mRNA decaping and subsequent 5'-3' exonucleolytic degradation by XRN1. May also be involved in post-transcriptional maturation of mRNA poly(A) tails.</text>
</comment>
<comment type="catalytic activity">
    <reaction evidence="1">
        <text>Exonucleolytic cleavage of poly(A) to 5'-AMP.</text>
        <dbReference type="EC" id="3.1.13.4"/>
    </reaction>
</comment>
<comment type="cofactor">
    <cofactor evidence="1">
        <name>a divalent metal cation</name>
        <dbReference type="ChEBI" id="CHEBI:60240"/>
    </cofactor>
    <text evidence="1">Binds 2 metal cations per subunit in the catalytic exonuclease domain.</text>
</comment>
<comment type="activity regulation">
    <text evidence="1">Positively regulated by the regulatory subunit PAN3.</text>
</comment>
<comment type="subunit">
    <text evidence="1">Forms a heterotrimer with an asymmetric homodimer of the regulatory subunit PAN3 to form the poly(A)-nuclease (PAN) deadenylation complex.</text>
</comment>
<comment type="subcellular location">
    <subcellularLocation>
        <location evidence="1">Cytoplasm</location>
    </subcellularLocation>
</comment>
<comment type="domain">
    <text evidence="1">Contains a pseudo-UCH domain. This ubiquitin C-terminal hydrolase (UCH)-like or ubiquitin specific protease (USP)-like domain is predicted to be catalytically inactive because it lacks the active site catalytic triad characteristic of thiol proteases, with residues at the equivalent structural positions that are incompatible with catalysis, and it cannot bind ubiquitin. It functions as a structural scaffold for intra- and intermolecular interactions in the complex.</text>
</comment>
<comment type="domain">
    <text evidence="1">The linker, or PAN3 interaction domain (PID), between the WD40 repeats and the pseudo-UCH domain mediates interaction with PAN3.</text>
</comment>
<comment type="similarity">
    <text evidence="1">Belongs to the peptidase C19 family. PAN2 subfamily.</text>
</comment>
<comment type="sequence caution" evidence="3">
    <conflict type="erroneous gene model prediction">
        <sequence resource="EMBL-CDS" id="EAQ84938"/>
    </conflict>
</comment>
<comment type="sequence caution" evidence="3">
    <conflict type="frameshift">
        <sequence resource="EMBL-CDS" id="EAQ84938"/>
    </conflict>
</comment>
<feature type="chain" id="PRO_0000295342" description="PAN2-PAN3 deadenylation complex catalytic subunit PAN2">
    <location>
        <begin position="1"/>
        <end position="1102"/>
    </location>
</feature>
<feature type="repeat" description="WD 1" evidence="1">
    <location>
        <begin position="20"/>
        <end position="59"/>
    </location>
</feature>
<feature type="repeat" description="WD 2" evidence="1">
    <location>
        <begin position="104"/>
        <end position="144"/>
    </location>
</feature>
<feature type="repeat" description="WD 3" evidence="1">
    <location>
        <begin position="269"/>
        <end position="308"/>
    </location>
</feature>
<feature type="domain" description="USP" evidence="1">
    <location>
        <begin position="446"/>
        <end position="833"/>
    </location>
</feature>
<feature type="domain" description="Exonuclease" evidence="1">
    <location>
        <begin position="881"/>
        <end position="1054"/>
    </location>
</feature>
<feature type="region of interest" description="Linker" evidence="1">
    <location>
        <begin position="308"/>
        <end position="445"/>
    </location>
</feature>
<feature type="region of interest" description="Disordered" evidence="2">
    <location>
        <begin position="423"/>
        <end position="442"/>
    </location>
</feature>
<feature type="binding site" evidence="1">
    <location>
        <position position="884"/>
    </location>
    <ligand>
        <name>a divalent metal cation</name>
        <dbReference type="ChEBI" id="CHEBI:60240"/>
        <note>catalytic</note>
    </ligand>
</feature>
<feature type="binding site" evidence="1">
    <location>
        <position position="886"/>
    </location>
    <ligand>
        <name>a divalent metal cation</name>
        <dbReference type="ChEBI" id="CHEBI:60240"/>
        <note>catalytic</note>
    </ligand>
</feature>
<feature type="binding site" evidence="1">
    <location>
        <position position="993"/>
    </location>
    <ligand>
        <name>a divalent metal cation</name>
        <dbReference type="ChEBI" id="CHEBI:60240"/>
        <note>catalytic</note>
    </ligand>
</feature>
<feature type="binding site" evidence="1">
    <location>
        <position position="1046"/>
    </location>
    <ligand>
        <name>a divalent metal cation</name>
        <dbReference type="ChEBI" id="CHEBI:60240"/>
        <note>catalytic</note>
    </ligand>
</feature>